<proteinExistence type="inferred from homology"/>
<sequence length="194" mass="20852">MTELVLIMVSAILVNNFVLVQFLGLCPFMGVSKKIETAIGLSLATTFVLTLAAMCSYLVQQYVLKPLDLEFLRTISFILVIAVTVQFTEMVVNKTSPLLYRVLGIFLPLITTNCIVLGVALLNANKAEFTFITATVNGFAAGLGFSLVLVLFAAMRERIAIADVPKSFQGAAIGMITAGLMSLAFMGFAGLIKL</sequence>
<keyword id="KW-0997">Cell inner membrane</keyword>
<keyword id="KW-1003">Cell membrane</keyword>
<keyword id="KW-0249">Electron transport</keyword>
<keyword id="KW-0472">Membrane</keyword>
<keyword id="KW-1278">Translocase</keyword>
<keyword id="KW-0812">Transmembrane</keyword>
<keyword id="KW-1133">Transmembrane helix</keyword>
<keyword id="KW-0813">Transport</keyword>
<name>RNFA_ECTM1</name>
<protein>
    <recommendedName>
        <fullName evidence="1">Ion-translocating oxidoreductase complex subunit A</fullName>
        <ecNumber evidence="1">7.-.-.-</ecNumber>
    </recommendedName>
    <alternativeName>
        <fullName evidence="1">Rnf electron transport complex subunit A</fullName>
    </alternativeName>
</protein>
<reference key="1">
    <citation type="submission" date="2007-04" db="EMBL/GenBank/DDBJ databases">
        <title>Complete sequence of Pseudomonas mendocina ymp.</title>
        <authorList>
            <consortium name="US DOE Joint Genome Institute"/>
            <person name="Copeland A."/>
            <person name="Lucas S."/>
            <person name="Lapidus A."/>
            <person name="Barry K."/>
            <person name="Glavina del Rio T."/>
            <person name="Dalin E."/>
            <person name="Tice H."/>
            <person name="Pitluck S."/>
            <person name="Kiss H."/>
            <person name="Brettin T."/>
            <person name="Detter J.C."/>
            <person name="Bruce D."/>
            <person name="Han C."/>
            <person name="Schmutz J."/>
            <person name="Larimer F."/>
            <person name="Land M."/>
            <person name="Hauser L."/>
            <person name="Kyrpides N."/>
            <person name="Mikhailova N."/>
            <person name="Hersman L."/>
            <person name="Dubois J."/>
            <person name="Maurice P."/>
            <person name="Richardson P."/>
        </authorList>
    </citation>
    <scope>NUCLEOTIDE SEQUENCE [LARGE SCALE GENOMIC DNA]</scope>
    <source>
        <strain>ymp</strain>
    </source>
</reference>
<dbReference type="EC" id="7.-.-.-" evidence="1"/>
<dbReference type="EMBL" id="CP000680">
    <property type="protein sequence ID" value="ABP84169.1"/>
    <property type="molecule type" value="Genomic_DNA"/>
</dbReference>
<dbReference type="SMR" id="A4XS53"/>
<dbReference type="STRING" id="399739.Pmen_1404"/>
<dbReference type="KEGG" id="pmy:Pmen_1404"/>
<dbReference type="PATRIC" id="fig|399739.8.peg.1425"/>
<dbReference type="eggNOG" id="COG4657">
    <property type="taxonomic scope" value="Bacteria"/>
</dbReference>
<dbReference type="HOGENOM" id="CLU_095255_1_0_6"/>
<dbReference type="OrthoDB" id="9803631at2"/>
<dbReference type="GO" id="GO:0005886">
    <property type="term" value="C:plasma membrane"/>
    <property type="evidence" value="ECO:0007669"/>
    <property type="project" value="UniProtKB-SubCell"/>
</dbReference>
<dbReference type="GO" id="GO:0022900">
    <property type="term" value="P:electron transport chain"/>
    <property type="evidence" value="ECO:0007669"/>
    <property type="project" value="UniProtKB-UniRule"/>
</dbReference>
<dbReference type="HAMAP" id="MF_00459">
    <property type="entry name" value="RsxA_RnfA"/>
    <property type="match status" value="1"/>
</dbReference>
<dbReference type="InterPro" id="IPR011293">
    <property type="entry name" value="Ion_transpt_RnfA/RsxA"/>
</dbReference>
<dbReference type="InterPro" id="IPR003667">
    <property type="entry name" value="NqrDE/RnfAE"/>
</dbReference>
<dbReference type="InterPro" id="IPR050133">
    <property type="entry name" value="NqrDE/RnfAE_oxidrdctase"/>
</dbReference>
<dbReference type="NCBIfam" id="NF003481">
    <property type="entry name" value="PRK05151.1"/>
    <property type="match status" value="1"/>
</dbReference>
<dbReference type="NCBIfam" id="TIGR01943">
    <property type="entry name" value="rnfA"/>
    <property type="match status" value="1"/>
</dbReference>
<dbReference type="PANTHER" id="PTHR30335">
    <property type="entry name" value="INTEGRAL MEMBRANE PROTEIN OF SOXR-REDUCING COMPLEX"/>
    <property type="match status" value="1"/>
</dbReference>
<dbReference type="PANTHER" id="PTHR30335:SF0">
    <property type="entry name" value="ION-TRANSLOCATING OXIDOREDUCTASE COMPLEX SUBUNIT A"/>
    <property type="match status" value="1"/>
</dbReference>
<dbReference type="Pfam" id="PF02508">
    <property type="entry name" value="Rnf-Nqr"/>
    <property type="match status" value="1"/>
</dbReference>
<dbReference type="PIRSF" id="PIRSF006102">
    <property type="entry name" value="NQR_DE"/>
    <property type="match status" value="1"/>
</dbReference>
<comment type="function">
    <text evidence="1">Part of a membrane-bound complex that couples electron transfer with translocation of ions across the membrane.</text>
</comment>
<comment type="subunit">
    <text evidence="1">The complex is composed of six subunits: RnfA, RnfB, RnfC, RnfD, RnfE and RnfG.</text>
</comment>
<comment type="subcellular location">
    <subcellularLocation>
        <location evidence="1">Cell inner membrane</location>
        <topology evidence="1">Multi-pass membrane protein</topology>
    </subcellularLocation>
</comment>
<comment type="similarity">
    <text evidence="1">Belongs to the NqrDE/RnfAE family.</text>
</comment>
<feature type="chain" id="PRO_1000060329" description="Ion-translocating oxidoreductase complex subunit A">
    <location>
        <begin position="1"/>
        <end position="194"/>
    </location>
</feature>
<feature type="transmembrane region" description="Helical" evidence="1">
    <location>
        <begin position="4"/>
        <end position="24"/>
    </location>
</feature>
<feature type="transmembrane region" description="Helical" evidence="1">
    <location>
        <begin position="39"/>
        <end position="59"/>
    </location>
</feature>
<feature type="transmembrane region" description="Helical" evidence="1">
    <location>
        <begin position="71"/>
        <end position="91"/>
    </location>
</feature>
<feature type="transmembrane region" description="Helical" evidence="1">
    <location>
        <begin position="102"/>
        <end position="122"/>
    </location>
</feature>
<feature type="transmembrane region" description="Helical" evidence="1">
    <location>
        <begin position="131"/>
        <end position="151"/>
    </location>
</feature>
<feature type="transmembrane region" description="Helical" evidence="1">
    <location>
        <begin position="172"/>
        <end position="192"/>
    </location>
</feature>
<accession>A4XS53</accession>
<gene>
    <name evidence="1" type="primary">rnfA</name>
    <name type="ordered locus">Pmen_1404</name>
</gene>
<organism>
    <name type="scientific">Ectopseudomonas mendocina (strain ymp)</name>
    <name type="common">Pseudomonas mendocina</name>
    <dbReference type="NCBI Taxonomy" id="399739"/>
    <lineage>
        <taxon>Bacteria</taxon>
        <taxon>Pseudomonadati</taxon>
        <taxon>Pseudomonadota</taxon>
        <taxon>Gammaproteobacteria</taxon>
        <taxon>Pseudomonadales</taxon>
        <taxon>Pseudomonadaceae</taxon>
        <taxon>Ectopseudomonas</taxon>
    </lineage>
</organism>
<evidence type="ECO:0000255" key="1">
    <source>
        <dbReference type="HAMAP-Rule" id="MF_00459"/>
    </source>
</evidence>